<sequence>METGSPGKRPVLPKRARLLVTAGMGMLALLLFGPRLVDIYVDWLWFGEVGFRSVWITVLLTRLAIVAAVALVVAGIVLAALLLAYRSRPFFVPDEPQRDPVAPLRSAVMRRPRLFGWGIAVTLGVVCGLIASFDWVKVQLFVHGGTFGIVDPEFGYDIGFFVFDLPFYRSVLNWLFVAVVLAFLASLLTHYLFGGLRLTTGRGMLTQAARVQLAVFAGAVVLLKAVAYWLDRYELLSSGRKEPTFTGAGYTDIHAELPAKLVLVAIAVLCAVSFFTAIFLRDLRIPAMAAALLVLSAILVGGLWPLLMEQFSVRPNAADVERPYIQRNIEATREAYRIGGDWVQYRSYPGIGTKQPRDVPVDVTTIAKVRLLDPHILSRTFTQQQQLKNFFSFAEILDIDRYRIDGELQDYIVGVRELSPKSLTGNQTDWINKHTVYTHGNGFVAAPANRVNAAARDAENISDSNSGYPIYAVSDIASLGSGRQVIPVEQPRVYYGEVIAQADPDYAIVGGAPGSAPREYDTDTSKYTYTGAGGVSIGNWFNRTVFATKFAQHKFLFSREIGSESKVLIHRDPKERVQRVAPWLTTDDNPYPVVVNGRIVWIVDAYTTLDTYPYAQRSSLEGPVTSPTGIVRQGKQVSYVRNSVKATVDAYDGTVTLFQFDRDDPVLRTWMRAFPGTVKSEDQIPDELRAHFRYPEDLFEVQRSLLAKYHVDEPREFFTTNAFWSVPSDPTNDANATQPPFYVLVGDQQSAQPSFRLASAMVGYNREFLSAYISAHSDPANYGKLTVLELPTDTLTQGPQQIQNSMISDTRVASERTLLERSNRIHYGNLLSLPIADGGVLYVEPLYTERISTSPSSSTFPQLSRVLVSVREPRTEGGVRVGYAPTLAESLDQVFGPGTGRVATAPGGDAASAPPPGAGGPAPPQAVPPPRTTQPPAAPPRGPDVPPATVAELRETLADLRAVLDRLEKAIDAAETPGG</sequence>
<comment type="subcellular location">
    <subcellularLocation>
        <location evidence="1">Cell membrane</location>
        <topology evidence="1">Multi-pass membrane protein</topology>
    </subcellularLocation>
</comment>
<comment type="similarity">
    <text evidence="1">Belongs to the UPF0182 family.</text>
</comment>
<name>Y095_MYCBP</name>
<keyword id="KW-1003">Cell membrane</keyword>
<keyword id="KW-0472">Membrane</keyword>
<keyword id="KW-0812">Transmembrane</keyword>
<keyword id="KW-1133">Transmembrane helix</keyword>
<reference key="1">
    <citation type="journal article" date="2007" name="Proc. Natl. Acad. Sci. U.S.A.">
        <title>Genome plasticity of BCG and impact on vaccine efficacy.</title>
        <authorList>
            <person name="Brosch R."/>
            <person name="Gordon S.V."/>
            <person name="Garnier T."/>
            <person name="Eiglmeier K."/>
            <person name="Frigui W."/>
            <person name="Valenti P."/>
            <person name="Dos Santos S."/>
            <person name="Duthoy S."/>
            <person name="Lacroix C."/>
            <person name="Garcia-Pelayo C."/>
            <person name="Inwald J.K."/>
            <person name="Golby P."/>
            <person name="Garcia J.N."/>
            <person name="Hewinson R.G."/>
            <person name="Behr M.A."/>
            <person name="Quail M.A."/>
            <person name="Churcher C."/>
            <person name="Barrell B.G."/>
            <person name="Parkhill J."/>
            <person name="Cole S.T."/>
        </authorList>
    </citation>
    <scope>NUCLEOTIDE SEQUENCE [LARGE SCALE GENOMIC DNA]</scope>
    <source>
        <strain>BCG / Pasteur 1173P2</strain>
    </source>
</reference>
<gene>
    <name type="ordered locus">BCG_0095</name>
</gene>
<dbReference type="EMBL" id="AM408590">
    <property type="protein sequence ID" value="CAL70079.1"/>
    <property type="molecule type" value="Genomic_DNA"/>
</dbReference>
<dbReference type="RefSeq" id="WP_003901785.1">
    <property type="nucleotide sequence ID" value="NC_008769.1"/>
</dbReference>
<dbReference type="SMR" id="A1KEN2"/>
<dbReference type="KEGG" id="mbb:BCG_0095"/>
<dbReference type="HOGENOM" id="CLU_007733_1_0_11"/>
<dbReference type="Proteomes" id="UP000001472">
    <property type="component" value="Chromosome"/>
</dbReference>
<dbReference type="GO" id="GO:0005576">
    <property type="term" value="C:extracellular region"/>
    <property type="evidence" value="ECO:0007669"/>
    <property type="project" value="TreeGrafter"/>
</dbReference>
<dbReference type="GO" id="GO:0005886">
    <property type="term" value="C:plasma membrane"/>
    <property type="evidence" value="ECO:0007669"/>
    <property type="project" value="UniProtKB-SubCell"/>
</dbReference>
<dbReference type="HAMAP" id="MF_01600">
    <property type="entry name" value="UPF0182"/>
    <property type="match status" value="1"/>
</dbReference>
<dbReference type="InterPro" id="IPR005372">
    <property type="entry name" value="UPF0182"/>
</dbReference>
<dbReference type="NCBIfam" id="NF000825">
    <property type="entry name" value="PRK00068.1"/>
    <property type="match status" value="1"/>
</dbReference>
<dbReference type="NCBIfam" id="NF009097">
    <property type="entry name" value="PRK12438.1"/>
    <property type="match status" value="1"/>
</dbReference>
<dbReference type="PANTHER" id="PTHR39344">
    <property type="entry name" value="UPF0182 PROTEIN SLL1060"/>
    <property type="match status" value="1"/>
</dbReference>
<dbReference type="PANTHER" id="PTHR39344:SF1">
    <property type="entry name" value="UPF0182 PROTEIN SLL1060"/>
    <property type="match status" value="1"/>
</dbReference>
<dbReference type="Pfam" id="PF03699">
    <property type="entry name" value="UPF0182"/>
    <property type="match status" value="1"/>
</dbReference>
<proteinExistence type="inferred from homology"/>
<accession>A1KEN2</accession>
<organism>
    <name type="scientific">Mycobacterium bovis (strain BCG / Pasteur 1173P2)</name>
    <dbReference type="NCBI Taxonomy" id="410289"/>
    <lineage>
        <taxon>Bacteria</taxon>
        <taxon>Bacillati</taxon>
        <taxon>Actinomycetota</taxon>
        <taxon>Actinomycetes</taxon>
        <taxon>Mycobacteriales</taxon>
        <taxon>Mycobacteriaceae</taxon>
        <taxon>Mycobacterium</taxon>
        <taxon>Mycobacterium tuberculosis complex</taxon>
    </lineage>
</organism>
<evidence type="ECO:0000255" key="1">
    <source>
        <dbReference type="HAMAP-Rule" id="MF_01600"/>
    </source>
</evidence>
<evidence type="ECO:0000256" key="2">
    <source>
        <dbReference type="SAM" id="MobiDB-lite"/>
    </source>
</evidence>
<protein>
    <recommendedName>
        <fullName evidence="1">UPF0182 protein BCG_0095</fullName>
    </recommendedName>
</protein>
<feature type="chain" id="PRO_0000291282" description="UPF0182 protein BCG_0095">
    <location>
        <begin position="1"/>
        <end position="979"/>
    </location>
</feature>
<feature type="transmembrane region" description="Helical" evidence="1">
    <location>
        <begin position="19"/>
        <end position="39"/>
    </location>
</feature>
<feature type="transmembrane region" description="Helical" evidence="1">
    <location>
        <begin position="63"/>
        <end position="83"/>
    </location>
</feature>
<feature type="transmembrane region" description="Helical" evidence="1">
    <location>
        <begin position="114"/>
        <end position="134"/>
    </location>
</feature>
<feature type="transmembrane region" description="Helical" evidence="1">
    <location>
        <begin position="174"/>
        <end position="194"/>
    </location>
</feature>
<feature type="transmembrane region" description="Helical" evidence="1">
    <location>
        <begin position="211"/>
        <end position="231"/>
    </location>
</feature>
<feature type="transmembrane region" description="Helical" evidence="1">
    <location>
        <begin position="260"/>
        <end position="280"/>
    </location>
</feature>
<feature type="transmembrane region" description="Helical" evidence="1">
    <location>
        <begin position="288"/>
        <end position="308"/>
    </location>
</feature>
<feature type="region of interest" description="Disordered" evidence="2">
    <location>
        <begin position="898"/>
        <end position="948"/>
    </location>
</feature>
<feature type="compositionally biased region" description="Low complexity" evidence="2">
    <location>
        <begin position="902"/>
        <end position="912"/>
    </location>
</feature>
<feature type="compositionally biased region" description="Pro residues" evidence="2">
    <location>
        <begin position="913"/>
        <end position="946"/>
    </location>
</feature>